<proteinExistence type="inferred from homology"/>
<comment type="function">
    <text evidence="2">Cytochrome P450 monooxygenase; part of the gene cluster that mediates the biosynthesis of aspirochlorine (or antibiotic A30641), an unusual halogenated spiro compound with distinctive antifungal properties due to selective inhibition of protein biosynthesis, and which is also active against bacteria, viruses, and murine tumor cells (PubMed:25302411). The non-ribosomal peptide synthetase (NRPS) aclP is responsible the formation of the diketopiperazine (DKP) core from the condensation of 2 phenylalanine residues (PubMed:25302411). One Phe residue is tailored into chlorotyrosine by hydroxylation and chlorination, whereas the second Phe undergoes an unprecedented C-C bond cleavage to be converted into glycine (PubMed:25302411). After formation of the DKP, sulfur is incorporated into the DKP by conjugation with glutathione by aclG, followed by its stepwise degradation to the thiol by aclI, aclJ and aclK, and the dithiol oxidation by aclT (PubMed:25302411). In addition, oxygenases (aclB, aclC, aclL and aclO) and O-methyltransferases (aclM and aclU) act as tailoring enzymes to produce the intermediate dechloroaspirochlorine (PubMed:25302411). Ultimately, chlorination of dechloroaspirochlorine by the halogenase aclH is the last step in the aspirochlorine pathway (PubMed:25302411).</text>
</comment>
<comment type="cofactor">
    <cofactor evidence="1">
        <name>heme</name>
        <dbReference type="ChEBI" id="CHEBI:30413"/>
    </cofactor>
</comment>
<comment type="pathway">
    <text evidence="5">Mycotoxin biosynthesis.</text>
</comment>
<comment type="similarity">
    <text evidence="4">Belongs to the cytochrome P450 family.</text>
</comment>
<evidence type="ECO:0000250" key="1">
    <source>
        <dbReference type="UniProtKB" id="P04798"/>
    </source>
</evidence>
<evidence type="ECO:0000269" key="2">
    <source>
    </source>
</evidence>
<evidence type="ECO:0000303" key="3">
    <source>
    </source>
</evidence>
<evidence type="ECO:0000305" key="4"/>
<evidence type="ECO:0000305" key="5">
    <source>
    </source>
</evidence>
<sequence>MLPMAILPNGDRWCHGCRQRYLRSRFPIFSVDGSRTLPTCPYKWPNGQGDVAKFLQGIENRDLWEKEHGQIYRIWSGMKSEVVLTQPSHLQAVFRDSNKHSKAENNNSGYLMSELLGQCVGLVSRERWRTLRAVTEIPFQHDKMPSYLELIQRHTRHHFDRLLASGDLRQERIHPAQDLKMLPFWVVAEIFYGECDAEMKTELQQLCVLREDLFKRMIQGGIVRWQWSKYLPTATNRALAEFQRRWRAFNQRAYDRACQQQRILPIVLMIEAAREGSTSVEQIYQTIDEALFANLDVTTGGISWNLVFFAAHSDIQERVRQEVLSATDHDAYLLSSSTLLAACISESARLKPLAAFTVPQSAPTDRIIGGYNIPAGTNLVVDTYALNIRNGFWGADSQCYRPDRFLEHRATELRYQYWRFGFGPRQCMGRYVADLVIRTLLAHLVAHYELGWVEPDPGKNSTWQRDLESWITIPDLQLRCVQRRND</sequence>
<reference key="1">
    <citation type="journal article" date="2005" name="Nature">
        <title>Genome sequencing and analysis of Aspergillus oryzae.</title>
        <authorList>
            <person name="Machida M."/>
            <person name="Asai K."/>
            <person name="Sano M."/>
            <person name="Tanaka T."/>
            <person name="Kumagai T."/>
            <person name="Terai G."/>
            <person name="Kusumoto K."/>
            <person name="Arima T."/>
            <person name="Akita O."/>
            <person name="Kashiwagi Y."/>
            <person name="Abe K."/>
            <person name="Gomi K."/>
            <person name="Horiuchi H."/>
            <person name="Kitamoto K."/>
            <person name="Kobayashi T."/>
            <person name="Takeuchi M."/>
            <person name="Denning D.W."/>
            <person name="Galagan J.E."/>
            <person name="Nierman W.C."/>
            <person name="Yu J."/>
            <person name="Archer D.B."/>
            <person name="Bennett J.W."/>
            <person name="Bhatnagar D."/>
            <person name="Cleveland T.E."/>
            <person name="Fedorova N.D."/>
            <person name="Gotoh O."/>
            <person name="Horikawa H."/>
            <person name="Hosoyama A."/>
            <person name="Ichinomiya M."/>
            <person name="Igarashi R."/>
            <person name="Iwashita K."/>
            <person name="Juvvadi P.R."/>
            <person name="Kato M."/>
            <person name="Kato Y."/>
            <person name="Kin T."/>
            <person name="Kokubun A."/>
            <person name="Maeda H."/>
            <person name="Maeyama N."/>
            <person name="Maruyama J."/>
            <person name="Nagasaki H."/>
            <person name="Nakajima T."/>
            <person name="Oda K."/>
            <person name="Okada K."/>
            <person name="Paulsen I."/>
            <person name="Sakamoto K."/>
            <person name="Sawano T."/>
            <person name="Takahashi M."/>
            <person name="Takase K."/>
            <person name="Terabayashi Y."/>
            <person name="Wortman J.R."/>
            <person name="Yamada O."/>
            <person name="Yamagata Y."/>
            <person name="Anazawa H."/>
            <person name="Hata Y."/>
            <person name="Koide Y."/>
            <person name="Komori T."/>
            <person name="Koyama Y."/>
            <person name="Minetoki T."/>
            <person name="Suharnan S."/>
            <person name="Tanaka A."/>
            <person name="Isono K."/>
            <person name="Kuhara S."/>
            <person name="Ogasawara N."/>
            <person name="Kikuchi H."/>
        </authorList>
    </citation>
    <scope>NUCLEOTIDE SEQUENCE [LARGE SCALE GENOMIC DNA]</scope>
    <source>
        <strain>ATCC 42149 / RIB 40</strain>
    </source>
</reference>
<reference key="2">
    <citation type="journal article" date="2014" name="Angew. Chem. Int. Ed.">
        <title>Biosynthesis of the halogenated mycotoxin aspirochlorine in koji mold involves a cryptic amino acid conversion.</title>
        <authorList>
            <person name="Chankhamjon P."/>
            <person name="Boettger-Schmidt D."/>
            <person name="Scherlach K."/>
            <person name="Urbansky B."/>
            <person name="Lackner G."/>
            <person name="Kalb D."/>
            <person name="Dahse H.M."/>
            <person name="Hoffmeister D."/>
            <person name="Hertweck C."/>
        </authorList>
    </citation>
    <scope>FUNCTION</scope>
    <scope>PATHWAY</scope>
</reference>
<organism>
    <name type="scientific">Aspergillus oryzae (strain ATCC 42149 / RIB 40)</name>
    <name type="common">Yellow koji mold</name>
    <dbReference type="NCBI Taxonomy" id="510516"/>
    <lineage>
        <taxon>Eukaryota</taxon>
        <taxon>Fungi</taxon>
        <taxon>Dikarya</taxon>
        <taxon>Ascomycota</taxon>
        <taxon>Pezizomycotina</taxon>
        <taxon>Eurotiomycetes</taxon>
        <taxon>Eurotiomycetidae</taxon>
        <taxon>Eurotiales</taxon>
        <taxon>Aspergillaceae</taxon>
        <taxon>Aspergillus</taxon>
        <taxon>Aspergillus subgen. Circumdati</taxon>
    </lineage>
</organism>
<protein>
    <recommendedName>
        <fullName evidence="3">Cytochrome P450 monooxygenase aclC</fullName>
        <ecNumber evidence="5">1.-.-.-</ecNumber>
    </recommendedName>
    <alternativeName>
        <fullName evidence="3">Aspirochlorine biosynthesis protein C</fullName>
    </alternativeName>
</protein>
<dbReference type="EC" id="1.-.-.-" evidence="5"/>
<dbReference type="EMBL" id="BA000050">
    <property type="protein sequence ID" value="BAE56604.1"/>
    <property type="molecule type" value="Genomic_DNA"/>
</dbReference>
<dbReference type="SMR" id="Q2UPB1"/>
<dbReference type="STRING" id="510516.Q2UPB1"/>
<dbReference type="EnsemblFungi" id="BAE56604">
    <property type="protein sequence ID" value="BAE56604"/>
    <property type="gene ID" value="AO090001000041"/>
</dbReference>
<dbReference type="HOGENOM" id="CLU_042557_2_0_1"/>
<dbReference type="OMA" id="QCMGRYV"/>
<dbReference type="Proteomes" id="UP000006564">
    <property type="component" value="Chromosome 2"/>
</dbReference>
<dbReference type="GO" id="GO:0020037">
    <property type="term" value="F:heme binding"/>
    <property type="evidence" value="ECO:0007669"/>
    <property type="project" value="InterPro"/>
</dbReference>
<dbReference type="GO" id="GO:0005506">
    <property type="term" value="F:iron ion binding"/>
    <property type="evidence" value="ECO:0007669"/>
    <property type="project" value="InterPro"/>
</dbReference>
<dbReference type="GO" id="GO:0004497">
    <property type="term" value="F:monooxygenase activity"/>
    <property type="evidence" value="ECO:0007669"/>
    <property type="project" value="UniProtKB-KW"/>
</dbReference>
<dbReference type="GO" id="GO:0016705">
    <property type="term" value="F:oxidoreductase activity, acting on paired donors, with incorporation or reduction of molecular oxygen"/>
    <property type="evidence" value="ECO:0007669"/>
    <property type="project" value="InterPro"/>
</dbReference>
<dbReference type="CDD" id="cd20615">
    <property type="entry name" value="CYP_GliC-like"/>
    <property type="match status" value="1"/>
</dbReference>
<dbReference type="Gene3D" id="1.10.630.10">
    <property type="entry name" value="Cytochrome P450"/>
    <property type="match status" value="1"/>
</dbReference>
<dbReference type="InterPro" id="IPR001128">
    <property type="entry name" value="Cyt_P450"/>
</dbReference>
<dbReference type="InterPro" id="IPR017972">
    <property type="entry name" value="Cyt_P450_CS"/>
</dbReference>
<dbReference type="InterPro" id="IPR002401">
    <property type="entry name" value="Cyt_P450_E_grp-I"/>
</dbReference>
<dbReference type="InterPro" id="IPR036396">
    <property type="entry name" value="Cyt_P450_sf"/>
</dbReference>
<dbReference type="InterPro" id="IPR050196">
    <property type="entry name" value="Cytochrome_P450_Monoox"/>
</dbReference>
<dbReference type="PANTHER" id="PTHR24291">
    <property type="entry name" value="CYTOCHROME P450 FAMILY 4"/>
    <property type="match status" value="1"/>
</dbReference>
<dbReference type="PANTHER" id="PTHR24291:SF167">
    <property type="entry name" value="CYTOCHROME P450 MONOOXYGENASE GLIC"/>
    <property type="match status" value="1"/>
</dbReference>
<dbReference type="Pfam" id="PF00067">
    <property type="entry name" value="p450"/>
    <property type="match status" value="1"/>
</dbReference>
<dbReference type="PRINTS" id="PR00463">
    <property type="entry name" value="EP450I"/>
</dbReference>
<dbReference type="PRINTS" id="PR00385">
    <property type="entry name" value="P450"/>
</dbReference>
<dbReference type="SUPFAM" id="SSF48264">
    <property type="entry name" value="Cytochrome P450"/>
    <property type="match status" value="1"/>
</dbReference>
<dbReference type="PROSITE" id="PS00086">
    <property type="entry name" value="CYTOCHROME_P450"/>
    <property type="match status" value="1"/>
</dbReference>
<feature type="chain" id="PRO_0000441196" description="Cytochrome P450 monooxygenase aclC">
    <location>
        <begin position="1"/>
        <end position="486"/>
    </location>
</feature>
<feature type="binding site" description="axial binding residue" evidence="1">
    <location>
        <position position="427"/>
    </location>
    <ligand>
        <name>heme</name>
        <dbReference type="ChEBI" id="CHEBI:30413"/>
    </ligand>
    <ligandPart>
        <name>Fe</name>
        <dbReference type="ChEBI" id="CHEBI:18248"/>
    </ligandPart>
</feature>
<accession>Q2UPB1</accession>
<keyword id="KW-0349">Heme</keyword>
<keyword id="KW-0408">Iron</keyword>
<keyword id="KW-0479">Metal-binding</keyword>
<keyword id="KW-0503">Monooxygenase</keyword>
<keyword id="KW-0560">Oxidoreductase</keyword>
<keyword id="KW-1185">Reference proteome</keyword>
<gene>
    <name evidence="3" type="primary">aclC</name>
    <name type="ORF">AO090001000041</name>
</gene>
<name>ACLC_ASPOR</name>